<dbReference type="EMBL" id="AM286280">
    <property type="protein sequence ID" value="CAL09076.1"/>
    <property type="molecule type" value="Genomic_DNA"/>
</dbReference>
<dbReference type="RefSeq" id="WP_003026119.1">
    <property type="nucleotide sequence ID" value="NC_008245.1"/>
</dbReference>
<dbReference type="SMR" id="Q14HF3"/>
<dbReference type="KEGG" id="ftf:FTF1060c"/>
<dbReference type="HOGENOM" id="CLU_078938_4_1_6"/>
<dbReference type="GO" id="GO:1990904">
    <property type="term" value="C:ribonucleoprotein complex"/>
    <property type="evidence" value="ECO:0007669"/>
    <property type="project" value="UniProtKB-KW"/>
</dbReference>
<dbReference type="GO" id="GO:0005840">
    <property type="term" value="C:ribosome"/>
    <property type="evidence" value="ECO:0007669"/>
    <property type="project" value="UniProtKB-KW"/>
</dbReference>
<dbReference type="GO" id="GO:0019843">
    <property type="term" value="F:rRNA binding"/>
    <property type="evidence" value="ECO:0007669"/>
    <property type="project" value="UniProtKB-UniRule"/>
</dbReference>
<dbReference type="GO" id="GO:0003735">
    <property type="term" value="F:structural constituent of ribosome"/>
    <property type="evidence" value="ECO:0007669"/>
    <property type="project" value="InterPro"/>
</dbReference>
<dbReference type="GO" id="GO:0006412">
    <property type="term" value="P:translation"/>
    <property type="evidence" value="ECO:0007669"/>
    <property type="project" value="UniProtKB-UniRule"/>
</dbReference>
<dbReference type="Gene3D" id="3.10.430.100">
    <property type="entry name" value="Ribosomal protein L9, C-terminal domain"/>
    <property type="match status" value="1"/>
</dbReference>
<dbReference type="Gene3D" id="3.40.5.10">
    <property type="entry name" value="Ribosomal protein L9, N-terminal domain"/>
    <property type="match status" value="1"/>
</dbReference>
<dbReference type="HAMAP" id="MF_00503">
    <property type="entry name" value="Ribosomal_bL9"/>
    <property type="match status" value="1"/>
</dbReference>
<dbReference type="InterPro" id="IPR000244">
    <property type="entry name" value="Ribosomal_bL9"/>
</dbReference>
<dbReference type="InterPro" id="IPR009027">
    <property type="entry name" value="Ribosomal_bL9/RNase_H1_N"/>
</dbReference>
<dbReference type="InterPro" id="IPR020594">
    <property type="entry name" value="Ribosomal_bL9_bac/chp"/>
</dbReference>
<dbReference type="InterPro" id="IPR020069">
    <property type="entry name" value="Ribosomal_bL9_C"/>
</dbReference>
<dbReference type="InterPro" id="IPR036791">
    <property type="entry name" value="Ribosomal_bL9_C_sf"/>
</dbReference>
<dbReference type="InterPro" id="IPR020070">
    <property type="entry name" value="Ribosomal_bL9_N"/>
</dbReference>
<dbReference type="InterPro" id="IPR036935">
    <property type="entry name" value="Ribosomal_bL9_N_sf"/>
</dbReference>
<dbReference type="NCBIfam" id="TIGR00158">
    <property type="entry name" value="L9"/>
    <property type="match status" value="1"/>
</dbReference>
<dbReference type="PANTHER" id="PTHR21368">
    <property type="entry name" value="50S RIBOSOMAL PROTEIN L9"/>
    <property type="match status" value="1"/>
</dbReference>
<dbReference type="Pfam" id="PF03948">
    <property type="entry name" value="Ribosomal_L9_C"/>
    <property type="match status" value="1"/>
</dbReference>
<dbReference type="Pfam" id="PF01281">
    <property type="entry name" value="Ribosomal_L9_N"/>
    <property type="match status" value="1"/>
</dbReference>
<dbReference type="SUPFAM" id="SSF55658">
    <property type="entry name" value="L9 N-domain-like"/>
    <property type="match status" value="1"/>
</dbReference>
<dbReference type="SUPFAM" id="SSF55653">
    <property type="entry name" value="Ribosomal protein L9 C-domain"/>
    <property type="match status" value="1"/>
</dbReference>
<dbReference type="PROSITE" id="PS00651">
    <property type="entry name" value="RIBOSOMAL_L9"/>
    <property type="match status" value="1"/>
</dbReference>
<feature type="chain" id="PRO_1000014779" description="Large ribosomal subunit protein bL9">
    <location>
        <begin position="1"/>
        <end position="151"/>
    </location>
</feature>
<accession>Q14HF3</accession>
<name>RL9_FRAT1</name>
<organism>
    <name type="scientific">Francisella tularensis subsp. tularensis (strain FSC 198)</name>
    <dbReference type="NCBI Taxonomy" id="393115"/>
    <lineage>
        <taxon>Bacteria</taxon>
        <taxon>Pseudomonadati</taxon>
        <taxon>Pseudomonadota</taxon>
        <taxon>Gammaproteobacteria</taxon>
        <taxon>Thiotrichales</taxon>
        <taxon>Francisellaceae</taxon>
        <taxon>Francisella</taxon>
    </lineage>
</organism>
<reference key="1">
    <citation type="journal article" date="2007" name="PLoS ONE">
        <title>Genome sequencing shows that European isolates of Francisella tularensis subspecies tularensis are almost identical to US laboratory strain Schu S4.</title>
        <authorList>
            <person name="Chaudhuri R.R."/>
            <person name="Ren C.-P."/>
            <person name="Desmond L."/>
            <person name="Vincent G.A."/>
            <person name="Silman N.J."/>
            <person name="Brehm J.K."/>
            <person name="Elmore M.J."/>
            <person name="Hudson M.J."/>
            <person name="Forsman M."/>
            <person name="Isherwood K.E."/>
            <person name="Gurycova D."/>
            <person name="Minton N.P."/>
            <person name="Titball R.W."/>
            <person name="Pallen M.J."/>
            <person name="Vipond R."/>
        </authorList>
    </citation>
    <scope>NUCLEOTIDE SEQUENCE [LARGE SCALE GENOMIC DNA]</scope>
    <source>
        <strain>FSC 198</strain>
    </source>
</reference>
<protein>
    <recommendedName>
        <fullName evidence="1">Large ribosomal subunit protein bL9</fullName>
    </recommendedName>
    <alternativeName>
        <fullName evidence="2">50S ribosomal protein L9</fullName>
    </alternativeName>
</protein>
<sequence length="151" mass="16075">MQVILKEKVENLGVLGDIVNVKPGYARNFLIPFGKAVQATQANIKAFEAQKAELEKAEKARFEAAVAVADAIKDKVYTIAAQAGEGGKLFGSVGTAEVAEAVSNQSGKKIEKSQVRMPEGVIRSIGEFELTVHVYTDVDADIKVNVVAAEA</sequence>
<gene>
    <name evidence="1" type="primary">rplI</name>
    <name type="ordered locus">FTF1060c</name>
</gene>
<comment type="function">
    <text evidence="1">Binds to the 23S rRNA.</text>
</comment>
<comment type="similarity">
    <text evidence="1">Belongs to the bacterial ribosomal protein bL9 family.</text>
</comment>
<keyword id="KW-0687">Ribonucleoprotein</keyword>
<keyword id="KW-0689">Ribosomal protein</keyword>
<keyword id="KW-0694">RNA-binding</keyword>
<keyword id="KW-0699">rRNA-binding</keyword>
<evidence type="ECO:0000255" key="1">
    <source>
        <dbReference type="HAMAP-Rule" id="MF_00503"/>
    </source>
</evidence>
<evidence type="ECO:0000305" key="2"/>
<proteinExistence type="inferred from homology"/>